<proteinExistence type="evidence at protein level"/>
<sequence>MAPGPFSSGLLSPPPAALPFLLLLWAGASRGQPCPGRCICQNVAPTLTMLCAKTGLLFVPPAIDRRVVELRLTDNFIAAVRRRDFANMTSLVHLTLSRNTIGQVAAGAFADLRALRALHLDSNRLAEVRGDQLRGLGNLRHLILGNNQIRKVESAAFDAFLSTVEDLDLSYNNLEALPWEAVGQMVNLNTLTLDHNLIDHIAEGTFVQLHKLVRLDMTSNRLHKLPPDGLFLRSQGGGPKPPTPLTVSFGGNPLHCNCELLWLRRLTREDDLETCATPEHLTDRYFWSIPEEEFLCEPPLITRQAGGRALVVEGQAVSLRCRAVGDPEPVVHWVAPDGRLLGNSSRTRVRGDGTLDVTITTLRDSGTFTCIASNAAGEATAPVEVCVVPLPLMAPPPAAPPPLTEPGSSDIATPGRPGANDSATERRLVAAELTSSSVLIRWPAQRPVPGIRMYQVQYNSSADDSLVYRMIPSTSQTFLVNDLAAGRAYDLCVLAVYDDGATALPATRVVGCVQFTTAGDPAPCRPLRAHFLGGTMIIAIGGVIVASVLVFIVLLMIRYKVYGDGDSRRIKGTSRSPPRVSHVCSQTNGSSAQQASAPPAPDRYEALREVAVPAAIEAKAMEAEATSTELEVVLGRSLGGSATSLCLLPSEETSGEESRAVTGPRRSRSGALGPPTSAPPTLALVRGGSPARPRPQQRYSFDGDYGALFQSHSYPRRARRTKRHRSTPHLDGAGGGAAGEDGDLGLGSARARLAFTSTEWMLESTV</sequence>
<gene>
    <name type="primary">Lrfn1</name>
    <name type="synonym">Salm2</name>
</gene>
<comment type="function">
    <text evidence="1 7">Promotes neurite outgrowth in hippocampal neurons (By similarity). Involved in the regulation of the differentiation and maintenance of excitatory synapses. Induces the clustering of excitatory postsynaptic proteins, including DLG4, DLGAP1, GRIA1 and GRIN1.</text>
</comment>
<comment type="subunit">
    <text evidence="1 7 8">Forms heteromeric complexes with LRFN2, LRFN4 and LRFN5; binding to LRFN2 and LRFN5 may be weaker than that to LRFN4. Also interacts with LRFN3 (By similarity). Forms homomeric complexes, but not across cell junctions (By similarity). Interacts with DLG1, DLG2 and DLG4, but not with MAGI2, not CASK. Interacts with DLG3 (By similarity). Interacts with 2 AMPA receptor subunits GRIA1 and GRIA2 and NMDA receptor subunit GRIN1.</text>
</comment>
<comment type="subcellular location">
    <subcellularLocation>
        <location evidence="7">Membrane</location>
        <topology evidence="7">Single-pass type I membrane protein</topology>
    </subcellularLocation>
    <subcellularLocation>
        <location evidence="7">Synapse</location>
    </subcellularLocation>
    <subcellularLocation>
        <location evidence="7">Postsynaptic density membrane</location>
    </subcellularLocation>
    <text>Detected in excitatory, but not inhibitory, synaptic plasma membrane.</text>
</comment>
<comment type="tissue specificity">
    <text evidence="7">Mainly expressed in brain (at protein level) and testis. In brain, found in cerebral cortex (including pyramidal neurons), hippocampus (including CA3 and CA1 neurons), dentate gyrus, cerebellum (including Purkinje neurons) (at protein level) (at protein level). Also expressed in the olfactory bulb.</text>
</comment>
<comment type="developmental stage">
    <text evidence="7">Expression increases steadily during postnatal rat brain development.</text>
</comment>
<comment type="domain">
    <text evidence="1">The PDZ-binding motif is required for neurite outgrowth promotion (By similarity). This motif is also involved in DLG1-, DLG3- and DLG4-binding.</text>
</comment>
<comment type="PTM">
    <text evidence="7">Glycosylated.</text>
</comment>
<comment type="similarity">
    <text evidence="9">Belongs to the LRFN family.</text>
</comment>
<reference key="1">
    <citation type="journal article" date="2004" name="Nature">
        <title>Genome sequence of the Brown Norway rat yields insights into mammalian evolution.</title>
        <authorList>
            <person name="Gibbs R.A."/>
            <person name="Weinstock G.M."/>
            <person name="Metzker M.L."/>
            <person name="Muzny D.M."/>
            <person name="Sodergren E.J."/>
            <person name="Scherer S."/>
            <person name="Scott G."/>
            <person name="Steffen D."/>
            <person name="Worley K.C."/>
            <person name="Burch P.E."/>
            <person name="Okwuonu G."/>
            <person name="Hines S."/>
            <person name="Lewis L."/>
            <person name="Deramo C."/>
            <person name="Delgado O."/>
            <person name="Dugan-Rocha S."/>
            <person name="Miner G."/>
            <person name="Morgan M."/>
            <person name="Hawes A."/>
            <person name="Gill R."/>
            <person name="Holt R.A."/>
            <person name="Adams M.D."/>
            <person name="Amanatides P.G."/>
            <person name="Baden-Tillson H."/>
            <person name="Barnstead M."/>
            <person name="Chin S."/>
            <person name="Evans C.A."/>
            <person name="Ferriera S."/>
            <person name="Fosler C."/>
            <person name="Glodek A."/>
            <person name="Gu Z."/>
            <person name="Jennings D."/>
            <person name="Kraft C.L."/>
            <person name="Nguyen T."/>
            <person name="Pfannkoch C.M."/>
            <person name="Sitter C."/>
            <person name="Sutton G.G."/>
            <person name="Venter J.C."/>
            <person name="Woodage T."/>
            <person name="Smith D."/>
            <person name="Lee H.-M."/>
            <person name="Gustafson E."/>
            <person name="Cahill P."/>
            <person name="Kana A."/>
            <person name="Doucette-Stamm L."/>
            <person name="Weinstock K."/>
            <person name="Fechtel K."/>
            <person name="Weiss R.B."/>
            <person name="Dunn D.M."/>
            <person name="Green E.D."/>
            <person name="Blakesley R.W."/>
            <person name="Bouffard G.G."/>
            <person name="De Jong P.J."/>
            <person name="Osoegawa K."/>
            <person name="Zhu B."/>
            <person name="Marra M."/>
            <person name="Schein J."/>
            <person name="Bosdet I."/>
            <person name="Fjell C."/>
            <person name="Jones S."/>
            <person name="Krzywinski M."/>
            <person name="Mathewson C."/>
            <person name="Siddiqui A."/>
            <person name="Wye N."/>
            <person name="McPherson J."/>
            <person name="Zhao S."/>
            <person name="Fraser C.M."/>
            <person name="Shetty J."/>
            <person name="Shatsman S."/>
            <person name="Geer K."/>
            <person name="Chen Y."/>
            <person name="Abramzon S."/>
            <person name="Nierman W.C."/>
            <person name="Havlak P.H."/>
            <person name="Chen R."/>
            <person name="Durbin K.J."/>
            <person name="Egan A."/>
            <person name="Ren Y."/>
            <person name="Song X.-Z."/>
            <person name="Li B."/>
            <person name="Liu Y."/>
            <person name="Qin X."/>
            <person name="Cawley S."/>
            <person name="Cooney A.J."/>
            <person name="D'Souza L.M."/>
            <person name="Martin K."/>
            <person name="Wu J.Q."/>
            <person name="Gonzalez-Garay M.L."/>
            <person name="Jackson A.R."/>
            <person name="Kalafus K.J."/>
            <person name="McLeod M.P."/>
            <person name="Milosavljevic A."/>
            <person name="Virk D."/>
            <person name="Volkov A."/>
            <person name="Wheeler D.A."/>
            <person name="Zhang Z."/>
            <person name="Bailey J.A."/>
            <person name="Eichler E.E."/>
            <person name="Tuzun E."/>
            <person name="Birney E."/>
            <person name="Mongin E."/>
            <person name="Ureta-Vidal A."/>
            <person name="Woodwark C."/>
            <person name="Zdobnov E."/>
            <person name="Bork P."/>
            <person name="Suyama M."/>
            <person name="Torrents D."/>
            <person name="Alexandersson M."/>
            <person name="Trask B.J."/>
            <person name="Young J.M."/>
            <person name="Huang H."/>
            <person name="Wang H."/>
            <person name="Xing H."/>
            <person name="Daniels S."/>
            <person name="Gietzen D."/>
            <person name="Schmidt J."/>
            <person name="Stevens K."/>
            <person name="Vitt U."/>
            <person name="Wingrove J."/>
            <person name="Camara F."/>
            <person name="Mar Alba M."/>
            <person name="Abril J.F."/>
            <person name="Guigo R."/>
            <person name="Smit A."/>
            <person name="Dubchak I."/>
            <person name="Rubin E.M."/>
            <person name="Couronne O."/>
            <person name="Poliakov A."/>
            <person name="Huebner N."/>
            <person name="Ganten D."/>
            <person name="Goesele C."/>
            <person name="Hummel O."/>
            <person name="Kreitler T."/>
            <person name="Lee Y.-A."/>
            <person name="Monti J."/>
            <person name="Schulz H."/>
            <person name="Zimdahl H."/>
            <person name="Himmelbauer H."/>
            <person name="Lehrach H."/>
            <person name="Jacob H.J."/>
            <person name="Bromberg S."/>
            <person name="Gullings-Handley J."/>
            <person name="Jensen-Seaman M.I."/>
            <person name="Kwitek A.E."/>
            <person name="Lazar J."/>
            <person name="Pasko D."/>
            <person name="Tonellato P.J."/>
            <person name="Twigger S."/>
            <person name="Ponting C.P."/>
            <person name="Duarte J.M."/>
            <person name="Rice S."/>
            <person name="Goodstadt L."/>
            <person name="Beatson S.A."/>
            <person name="Emes R.D."/>
            <person name="Winter E.E."/>
            <person name="Webber C."/>
            <person name="Brandt P."/>
            <person name="Nyakatura G."/>
            <person name="Adetobi M."/>
            <person name="Chiaromonte F."/>
            <person name="Elnitski L."/>
            <person name="Eswara P."/>
            <person name="Hardison R.C."/>
            <person name="Hou M."/>
            <person name="Kolbe D."/>
            <person name="Makova K."/>
            <person name="Miller W."/>
            <person name="Nekrutenko A."/>
            <person name="Riemer C."/>
            <person name="Schwartz S."/>
            <person name="Taylor J."/>
            <person name="Yang S."/>
            <person name="Zhang Y."/>
            <person name="Lindpaintner K."/>
            <person name="Andrews T.D."/>
            <person name="Caccamo M."/>
            <person name="Clamp M."/>
            <person name="Clarke L."/>
            <person name="Curwen V."/>
            <person name="Durbin R.M."/>
            <person name="Eyras E."/>
            <person name="Searle S.M."/>
            <person name="Cooper G.M."/>
            <person name="Batzoglou S."/>
            <person name="Brudno M."/>
            <person name="Sidow A."/>
            <person name="Stone E.A."/>
            <person name="Payseur B.A."/>
            <person name="Bourque G."/>
            <person name="Lopez-Otin C."/>
            <person name="Puente X.S."/>
            <person name="Chakrabarti K."/>
            <person name="Chatterji S."/>
            <person name="Dewey C."/>
            <person name="Pachter L."/>
            <person name="Bray N."/>
            <person name="Yap V.B."/>
            <person name="Caspi A."/>
            <person name="Tesler G."/>
            <person name="Pevzner P.A."/>
            <person name="Haussler D."/>
            <person name="Roskin K.M."/>
            <person name="Baertsch R."/>
            <person name="Clawson H."/>
            <person name="Furey T.S."/>
            <person name="Hinrichs A.S."/>
            <person name="Karolchik D."/>
            <person name="Kent W.J."/>
            <person name="Rosenbloom K.R."/>
            <person name="Trumbower H."/>
            <person name="Weirauch M."/>
            <person name="Cooper D.N."/>
            <person name="Stenson P.D."/>
            <person name="Ma B."/>
            <person name="Brent M."/>
            <person name="Arumugam M."/>
            <person name="Shteynberg D."/>
            <person name="Copley R.R."/>
            <person name="Taylor M.S."/>
            <person name="Riethman H."/>
            <person name="Mudunuri U."/>
            <person name="Peterson J."/>
            <person name="Guyer M."/>
            <person name="Felsenfeld A."/>
            <person name="Old S."/>
            <person name="Mockrin S."/>
            <person name="Collins F.S."/>
        </authorList>
    </citation>
    <scope>NUCLEOTIDE SEQUENCE [LARGE SCALE GENOMIC DNA]</scope>
    <source>
        <strain>Brown Norway</strain>
    </source>
</reference>
<reference key="2">
    <citation type="journal article" date="2006" name="Neuron">
        <title>SALM synaptic cell adhesion-like molecules regulate the differentiation of excitatory synapses.</title>
        <authorList>
            <person name="Ko J."/>
            <person name="Kim S."/>
            <person name="Chung H.S."/>
            <person name="Kim K."/>
            <person name="Han K."/>
            <person name="Kim H."/>
            <person name="Jun H."/>
            <person name="Kaang B.-K."/>
            <person name="Kim E."/>
        </authorList>
    </citation>
    <scope>FUNCTION</scope>
    <scope>SUBCELLULAR LOCATION</scope>
    <scope>TISSUE SPECIFICITY</scope>
    <scope>DEVELOPMENTAL STAGE</scope>
    <scope>GLYCOSYLATION</scope>
    <scope>INTERACTION WITH DLG1; DLG2; DLG4; GRIA1; GRIA2 AND GRIN1</scope>
    <scope>MUTAGENESIS OF 764-SER--VAL-766</scope>
</reference>
<reference key="3">
    <citation type="journal article" date="2008" name="J. Biol. Chem.">
        <title>The SALM family of adhesion-like molecules forms heteromeric and homomeric complexes.</title>
        <authorList>
            <person name="Seabold G.K."/>
            <person name="Wang P.Y."/>
            <person name="Chang K."/>
            <person name="Wang C.Y."/>
            <person name="Wang Y.X."/>
            <person name="Petralia R.S."/>
            <person name="Wenthold R.J."/>
        </authorList>
    </citation>
    <scope>INTERACTION WITH LRFN2; LRFN4 AND LRFN5</scope>
</reference>
<accession>P0C7J6</accession>
<protein>
    <recommendedName>
        <fullName>Leucine-rich repeat and fibronectin type III domain-containing protein 1</fullName>
    </recommendedName>
    <alternativeName>
        <fullName>Synaptic adhesion-like molecule 2</fullName>
    </alternativeName>
</protein>
<name>LRFN1_RAT</name>
<feature type="signal peptide" evidence="3">
    <location>
        <begin position="1"/>
        <end position="31"/>
    </location>
</feature>
<feature type="chain" id="PRO_0000334147" description="Leucine-rich repeat and fibronectin type III domain-containing protein 1">
    <location>
        <begin position="32"/>
        <end position="766"/>
    </location>
</feature>
<feature type="topological domain" description="Extracellular" evidence="3">
    <location>
        <begin position="32"/>
        <end position="536"/>
    </location>
</feature>
<feature type="transmembrane region" description="Helical" evidence="3">
    <location>
        <begin position="537"/>
        <end position="557"/>
    </location>
</feature>
<feature type="topological domain" description="Cytoplasmic" evidence="3">
    <location>
        <begin position="558"/>
        <end position="766"/>
    </location>
</feature>
<feature type="domain" description="LRRNT">
    <location>
        <begin position="32"/>
        <end position="65"/>
    </location>
</feature>
<feature type="repeat" description="LRR 1">
    <location>
        <begin position="66"/>
        <end position="87"/>
    </location>
</feature>
<feature type="repeat" description="LRR 2">
    <location>
        <begin position="90"/>
        <end position="111"/>
    </location>
</feature>
<feature type="repeat" description="LRR 3">
    <location>
        <begin position="114"/>
        <end position="135"/>
    </location>
</feature>
<feature type="repeat" description="LRR 4">
    <location>
        <begin position="138"/>
        <end position="159"/>
    </location>
</feature>
<feature type="repeat" description="LRR 5">
    <location>
        <begin position="163"/>
        <end position="184"/>
    </location>
</feature>
<feature type="repeat" description="LRR 6">
    <location>
        <begin position="187"/>
        <end position="208"/>
    </location>
</feature>
<feature type="repeat" description="LRR 7">
    <location>
        <begin position="211"/>
        <end position="232"/>
    </location>
</feature>
<feature type="domain" description="LRRCT">
    <location>
        <begin position="252"/>
        <end position="298"/>
    </location>
</feature>
<feature type="domain" description="Ig-like">
    <location>
        <begin position="299"/>
        <end position="386"/>
    </location>
</feature>
<feature type="domain" description="Fibronectin type-III" evidence="5">
    <location>
        <begin position="424"/>
        <end position="520"/>
    </location>
</feature>
<feature type="region of interest" description="Disordered" evidence="6">
    <location>
        <begin position="397"/>
        <end position="422"/>
    </location>
</feature>
<feature type="region of interest" description="Disordered" evidence="6">
    <location>
        <begin position="568"/>
        <end position="601"/>
    </location>
</feature>
<feature type="region of interest" description="Disordered" evidence="6">
    <location>
        <begin position="646"/>
        <end position="742"/>
    </location>
</feature>
<feature type="compositionally biased region" description="Basic residues" evidence="6">
    <location>
        <begin position="714"/>
        <end position="727"/>
    </location>
</feature>
<feature type="modified residue" description="Phosphoserine" evidence="2">
    <location>
        <position position="713"/>
    </location>
</feature>
<feature type="glycosylation site" description="N-linked (GlcNAc...) asparagine" evidence="3">
    <location>
        <position position="87"/>
    </location>
</feature>
<feature type="glycosylation site" description="N-linked (GlcNAc...) asparagine" evidence="3">
    <location>
        <position position="343"/>
    </location>
</feature>
<feature type="disulfide bond" evidence="4">
    <location>
        <begin position="321"/>
        <end position="370"/>
    </location>
</feature>
<feature type="mutagenesis site" description="Loss of DLG1-, DLG3- and DLG4-binding." evidence="7">
    <location>
        <begin position="764"/>
        <end position="766"/>
    </location>
</feature>
<dbReference type="EMBL" id="AABR03001365">
    <property type="status" value="NOT_ANNOTATED_CDS"/>
    <property type="molecule type" value="Genomic_DNA"/>
</dbReference>
<dbReference type="RefSeq" id="NP_001121166.1">
    <property type="nucleotide sequence ID" value="NM_001127694.2"/>
</dbReference>
<dbReference type="RefSeq" id="XP_006228688.1">
    <property type="nucleotide sequence ID" value="XM_006228626.5"/>
</dbReference>
<dbReference type="RefSeq" id="XP_006228690.1">
    <property type="nucleotide sequence ID" value="XM_006228628.5"/>
</dbReference>
<dbReference type="RefSeq" id="XP_008757396.1">
    <property type="nucleotide sequence ID" value="XM_008759174.4"/>
</dbReference>
<dbReference type="RefSeq" id="XP_008757397.1">
    <property type="nucleotide sequence ID" value="XM_008759175.2"/>
</dbReference>
<dbReference type="RefSeq" id="XP_017444960.1">
    <property type="nucleotide sequence ID" value="XM_017589471.3"/>
</dbReference>
<dbReference type="RefSeq" id="XP_017444961.1">
    <property type="nucleotide sequence ID" value="XM_017589472.3"/>
</dbReference>
<dbReference type="RefSeq" id="XP_017444962.1">
    <property type="nucleotide sequence ID" value="XM_017589473.3"/>
</dbReference>
<dbReference type="RefSeq" id="XP_038940893.1">
    <property type="nucleotide sequence ID" value="XM_039084965.2"/>
</dbReference>
<dbReference type="RefSeq" id="XP_038940894.1">
    <property type="nucleotide sequence ID" value="XM_039084966.2"/>
</dbReference>
<dbReference type="RefSeq" id="XP_038940896.1">
    <property type="nucleotide sequence ID" value="XM_039084968.2"/>
</dbReference>
<dbReference type="RefSeq" id="XP_038940899.1">
    <property type="nucleotide sequence ID" value="XM_039084971.2"/>
</dbReference>
<dbReference type="RefSeq" id="XP_038940901.1">
    <property type="nucleotide sequence ID" value="XM_039084973.2"/>
</dbReference>
<dbReference type="RefSeq" id="XP_038940903.1">
    <property type="nucleotide sequence ID" value="XM_039084975.2"/>
</dbReference>
<dbReference type="SMR" id="P0C7J6"/>
<dbReference type="FunCoup" id="P0C7J6">
    <property type="interactions" value="391"/>
</dbReference>
<dbReference type="STRING" id="10116.ENSRNOP00000053905"/>
<dbReference type="GlyCosmos" id="P0C7J6">
    <property type="glycosylation" value="2 sites, No reported glycans"/>
</dbReference>
<dbReference type="GlyGen" id="P0C7J6">
    <property type="glycosylation" value="3 sites"/>
</dbReference>
<dbReference type="iPTMnet" id="P0C7J6"/>
<dbReference type="PhosphoSitePlus" id="P0C7J6"/>
<dbReference type="PaxDb" id="10116-ENSRNOP00000053905"/>
<dbReference type="Ensembl" id="ENSRNOT00000057073.6">
    <property type="protein sequence ID" value="ENSRNOP00000053905.2"/>
    <property type="gene ID" value="ENSRNOG00000019869.9"/>
</dbReference>
<dbReference type="GeneID" id="365222"/>
<dbReference type="KEGG" id="rno:365222"/>
<dbReference type="UCSC" id="RGD:1304707">
    <property type="organism name" value="rat"/>
</dbReference>
<dbReference type="AGR" id="RGD:1304707"/>
<dbReference type="CTD" id="57622"/>
<dbReference type="RGD" id="1304707">
    <property type="gene designation" value="Lrfn1"/>
</dbReference>
<dbReference type="eggNOG" id="KOG0619">
    <property type="taxonomic scope" value="Eukaryota"/>
</dbReference>
<dbReference type="GeneTree" id="ENSGT00940000160922"/>
<dbReference type="HOGENOM" id="CLU_016998_0_1_1"/>
<dbReference type="InParanoid" id="P0C7J6"/>
<dbReference type="OMA" id="GSTEWML"/>
<dbReference type="OrthoDB" id="71851at9989"/>
<dbReference type="PhylomeDB" id="P0C7J6"/>
<dbReference type="TreeFam" id="TF350185"/>
<dbReference type="Reactome" id="R-RNO-8849932">
    <property type="pathway name" value="Synaptic adhesion-like molecules"/>
</dbReference>
<dbReference type="PRO" id="PR:P0C7J6"/>
<dbReference type="Proteomes" id="UP000002494">
    <property type="component" value="Chromosome 1"/>
</dbReference>
<dbReference type="Bgee" id="ENSRNOG00000019869">
    <property type="expression patterns" value="Expressed in frontal cortex and 15 other cell types or tissues"/>
</dbReference>
<dbReference type="ExpressionAtlas" id="P0C7J6">
    <property type="expression patterns" value="baseline and differential"/>
</dbReference>
<dbReference type="GO" id="GO:0009986">
    <property type="term" value="C:cell surface"/>
    <property type="evidence" value="ECO:0000266"/>
    <property type="project" value="RGD"/>
</dbReference>
<dbReference type="GO" id="GO:0098839">
    <property type="term" value="C:postsynaptic density membrane"/>
    <property type="evidence" value="ECO:0000314"/>
    <property type="project" value="SynGO"/>
</dbReference>
<dbReference type="GO" id="GO:0099151">
    <property type="term" value="P:regulation of postsynaptic density assembly"/>
    <property type="evidence" value="ECO:0000314"/>
    <property type="project" value="SynGO"/>
</dbReference>
<dbReference type="CDD" id="cd00063">
    <property type="entry name" value="FN3"/>
    <property type="match status" value="1"/>
</dbReference>
<dbReference type="FunFam" id="2.60.40.10:FF:000235">
    <property type="entry name" value="Leucine-rich repeat and fibronectin type III domain-containing 2"/>
    <property type="match status" value="1"/>
</dbReference>
<dbReference type="FunFam" id="2.60.40.10:FF:000091">
    <property type="entry name" value="Leucine-rich repeat and fibronectin type III domain-containing protein 1"/>
    <property type="match status" value="1"/>
</dbReference>
<dbReference type="FunFam" id="3.80.10.10:FF:000016">
    <property type="entry name" value="Leucine-rich repeat and fibronectin type III domain-containing protein 1"/>
    <property type="match status" value="1"/>
</dbReference>
<dbReference type="FunFam" id="3.80.10.10:FF:000019">
    <property type="entry name" value="leucine-rich repeat and fibronectin type III domain-containing protein 1"/>
    <property type="match status" value="1"/>
</dbReference>
<dbReference type="Gene3D" id="2.60.40.10">
    <property type="entry name" value="Immunoglobulins"/>
    <property type="match status" value="2"/>
</dbReference>
<dbReference type="Gene3D" id="3.80.10.10">
    <property type="entry name" value="Ribonuclease Inhibitor"/>
    <property type="match status" value="2"/>
</dbReference>
<dbReference type="InterPro" id="IPR000483">
    <property type="entry name" value="Cys-rich_flank_reg_C"/>
</dbReference>
<dbReference type="InterPro" id="IPR003961">
    <property type="entry name" value="FN3_dom"/>
</dbReference>
<dbReference type="InterPro" id="IPR036116">
    <property type="entry name" value="FN3_sf"/>
</dbReference>
<dbReference type="InterPro" id="IPR007110">
    <property type="entry name" value="Ig-like_dom"/>
</dbReference>
<dbReference type="InterPro" id="IPR036179">
    <property type="entry name" value="Ig-like_dom_sf"/>
</dbReference>
<dbReference type="InterPro" id="IPR013783">
    <property type="entry name" value="Ig-like_fold"/>
</dbReference>
<dbReference type="InterPro" id="IPR013098">
    <property type="entry name" value="Ig_I-set"/>
</dbReference>
<dbReference type="InterPro" id="IPR003599">
    <property type="entry name" value="Ig_sub"/>
</dbReference>
<dbReference type="InterPro" id="IPR003598">
    <property type="entry name" value="Ig_sub2"/>
</dbReference>
<dbReference type="InterPro" id="IPR001611">
    <property type="entry name" value="Leu-rich_rpt"/>
</dbReference>
<dbReference type="InterPro" id="IPR003591">
    <property type="entry name" value="Leu-rich_rpt_typical-subtyp"/>
</dbReference>
<dbReference type="InterPro" id="IPR050467">
    <property type="entry name" value="LRFN"/>
</dbReference>
<dbReference type="InterPro" id="IPR032675">
    <property type="entry name" value="LRR_dom_sf"/>
</dbReference>
<dbReference type="PANTHER" id="PTHR45842:SF7">
    <property type="entry name" value="LEUCINE-RICH REPEAT AND FIBRONECTIN TYPE III DOMAIN-CONTAINING PROTEIN 1"/>
    <property type="match status" value="1"/>
</dbReference>
<dbReference type="PANTHER" id="PTHR45842">
    <property type="entry name" value="SYNAPTIC ADHESION-LIKE MOLECULE SALM"/>
    <property type="match status" value="1"/>
</dbReference>
<dbReference type="Pfam" id="PF00041">
    <property type="entry name" value="fn3"/>
    <property type="match status" value="1"/>
</dbReference>
<dbReference type="Pfam" id="PF07679">
    <property type="entry name" value="I-set"/>
    <property type="match status" value="1"/>
</dbReference>
<dbReference type="Pfam" id="PF13855">
    <property type="entry name" value="LRR_8"/>
    <property type="match status" value="2"/>
</dbReference>
<dbReference type="SMART" id="SM00409">
    <property type="entry name" value="IG"/>
    <property type="match status" value="1"/>
</dbReference>
<dbReference type="SMART" id="SM00408">
    <property type="entry name" value="IGc2"/>
    <property type="match status" value="1"/>
</dbReference>
<dbReference type="SMART" id="SM00369">
    <property type="entry name" value="LRR_TYP"/>
    <property type="match status" value="6"/>
</dbReference>
<dbReference type="SMART" id="SM00082">
    <property type="entry name" value="LRRCT"/>
    <property type="match status" value="1"/>
</dbReference>
<dbReference type="SUPFAM" id="SSF49265">
    <property type="entry name" value="Fibronectin type III"/>
    <property type="match status" value="1"/>
</dbReference>
<dbReference type="SUPFAM" id="SSF48726">
    <property type="entry name" value="Immunoglobulin"/>
    <property type="match status" value="1"/>
</dbReference>
<dbReference type="SUPFAM" id="SSF52058">
    <property type="entry name" value="L domain-like"/>
    <property type="match status" value="1"/>
</dbReference>
<dbReference type="PROSITE" id="PS50853">
    <property type="entry name" value="FN3"/>
    <property type="match status" value="1"/>
</dbReference>
<dbReference type="PROSITE" id="PS50835">
    <property type="entry name" value="IG_LIKE"/>
    <property type="match status" value="1"/>
</dbReference>
<dbReference type="PROSITE" id="PS51450">
    <property type="entry name" value="LRR"/>
    <property type="match status" value="6"/>
</dbReference>
<keyword id="KW-1003">Cell membrane</keyword>
<keyword id="KW-1015">Disulfide bond</keyword>
<keyword id="KW-0325">Glycoprotein</keyword>
<keyword id="KW-0393">Immunoglobulin domain</keyword>
<keyword id="KW-0433">Leucine-rich repeat</keyword>
<keyword id="KW-0472">Membrane</keyword>
<keyword id="KW-0597">Phosphoprotein</keyword>
<keyword id="KW-0628">Postsynaptic cell membrane</keyword>
<keyword id="KW-1185">Reference proteome</keyword>
<keyword id="KW-0677">Repeat</keyword>
<keyword id="KW-0732">Signal</keyword>
<keyword id="KW-0770">Synapse</keyword>
<keyword id="KW-0812">Transmembrane</keyword>
<keyword id="KW-1133">Transmembrane helix</keyword>
<evidence type="ECO:0000250" key="1"/>
<evidence type="ECO:0000250" key="2">
    <source>
        <dbReference type="UniProtKB" id="Q9P244"/>
    </source>
</evidence>
<evidence type="ECO:0000255" key="3"/>
<evidence type="ECO:0000255" key="4">
    <source>
        <dbReference type="PROSITE-ProRule" id="PRU00114"/>
    </source>
</evidence>
<evidence type="ECO:0000255" key="5">
    <source>
        <dbReference type="PROSITE-ProRule" id="PRU00316"/>
    </source>
</evidence>
<evidence type="ECO:0000256" key="6">
    <source>
        <dbReference type="SAM" id="MobiDB-lite"/>
    </source>
</evidence>
<evidence type="ECO:0000269" key="7">
    <source>
    </source>
</evidence>
<evidence type="ECO:0000269" key="8">
    <source>
    </source>
</evidence>
<evidence type="ECO:0000305" key="9"/>
<organism>
    <name type="scientific">Rattus norvegicus</name>
    <name type="common">Rat</name>
    <dbReference type="NCBI Taxonomy" id="10116"/>
    <lineage>
        <taxon>Eukaryota</taxon>
        <taxon>Metazoa</taxon>
        <taxon>Chordata</taxon>
        <taxon>Craniata</taxon>
        <taxon>Vertebrata</taxon>
        <taxon>Euteleostomi</taxon>
        <taxon>Mammalia</taxon>
        <taxon>Eutheria</taxon>
        <taxon>Euarchontoglires</taxon>
        <taxon>Glires</taxon>
        <taxon>Rodentia</taxon>
        <taxon>Myomorpha</taxon>
        <taxon>Muroidea</taxon>
        <taxon>Muridae</taxon>
        <taxon>Murinae</taxon>
        <taxon>Rattus</taxon>
    </lineage>
</organism>